<sequence>TKKDGEEKVA</sequence>
<comment type="function">
    <text>Strongly inhibits trypsin and plasma enzyme(s) activity.</text>
</comment>
<comment type="subunit">
    <text>Monomer.</text>
</comment>
<comment type="similarity">
    <text evidence="1">Belongs to the serpin family.</text>
</comment>
<keyword id="KW-0903">Direct protein sequencing</keyword>
<keyword id="KW-0646">Protease inhibitor</keyword>
<keyword id="KW-0722">Serine protease inhibitor</keyword>
<protein>
    <recommendedName>
        <fullName>Serine proteinase inhibitor</fullName>
    </recommendedName>
</protein>
<organism>
    <name type="scientific">Halocynthia roretzi</name>
    <name type="common">Sea squirt</name>
    <name type="synonym">Cynthia roretzi</name>
    <dbReference type="NCBI Taxonomy" id="7729"/>
    <lineage>
        <taxon>Eukaryota</taxon>
        <taxon>Metazoa</taxon>
        <taxon>Chordata</taxon>
        <taxon>Tunicata</taxon>
        <taxon>Ascidiacea</taxon>
        <taxon>Stolidobranchia</taxon>
        <taxon>Pyuridae</taxon>
        <taxon>Halocynthia</taxon>
    </lineage>
</organism>
<evidence type="ECO:0000305" key="1"/>
<accession>Q10997</accession>
<feature type="chain" id="PRO_0000094132" description="Serine proteinase inhibitor">
    <location>
        <begin position="1"/>
        <end position="10" status="greater than"/>
    </location>
</feature>
<feature type="non-terminal residue">
    <location>
        <position position="10"/>
    </location>
</feature>
<reference key="1">
    <citation type="journal article" date="1996" name="Comp. Biochem. Physiol.">
        <title>Purification and characterization of a 58,000-Da proteinase inhibitor from the hemolymph of a solitary ascidian, Halocynthia roretzi.</title>
        <authorList>
            <person name="Shishikura F."/>
            <person name="Abe T."/>
            <person name="Ohtake S."/>
            <person name="Tanaka K."/>
        </authorList>
    </citation>
    <scope>PROTEIN SEQUENCE</scope>
    <source>
        <tissue>Hemolymph</tissue>
    </source>
</reference>
<name>SPI_HALRO</name>
<dbReference type="GO" id="GO:0004867">
    <property type="term" value="F:serine-type endopeptidase inhibitor activity"/>
    <property type="evidence" value="ECO:0007669"/>
    <property type="project" value="UniProtKB-KW"/>
</dbReference>
<proteinExistence type="evidence at protein level"/>